<organism>
    <name type="scientific">Staphylococcus aureus (strain MSSA476)</name>
    <dbReference type="NCBI Taxonomy" id="282459"/>
    <lineage>
        <taxon>Bacteria</taxon>
        <taxon>Bacillati</taxon>
        <taxon>Bacillota</taxon>
        <taxon>Bacilli</taxon>
        <taxon>Bacillales</taxon>
        <taxon>Staphylococcaceae</taxon>
        <taxon>Staphylococcus</taxon>
    </lineage>
</organism>
<protein>
    <recommendedName>
        <fullName evidence="1">N-acetylneuraminate lyase</fullName>
        <shortName evidence="1">NAL</shortName>
        <shortName evidence="1">Neu5Ac lyase</shortName>
        <ecNumber evidence="1">4.1.3.3</ecNumber>
    </recommendedName>
    <alternativeName>
        <fullName evidence="1">N-acetylneuraminate pyruvate-lyase</fullName>
    </alternativeName>
    <alternativeName>
        <fullName evidence="1">N-acetylneuraminic acid aldolase</fullName>
    </alternativeName>
    <alternativeName>
        <fullName evidence="1">Sialate lyase</fullName>
    </alternativeName>
    <alternativeName>
        <fullName evidence="1">Sialic acid aldolase</fullName>
    </alternativeName>
    <alternativeName>
        <fullName evidence="1">Sialic acid lyase</fullName>
    </alternativeName>
</protein>
<accession>Q6GCF6</accession>
<evidence type="ECO:0000255" key="1">
    <source>
        <dbReference type="HAMAP-Rule" id="MF_01237"/>
    </source>
</evidence>
<reference key="1">
    <citation type="journal article" date="2004" name="Proc. Natl. Acad. Sci. U.S.A.">
        <title>Complete genomes of two clinical Staphylococcus aureus strains: evidence for the rapid evolution of virulence and drug resistance.</title>
        <authorList>
            <person name="Holden M.T.G."/>
            <person name="Feil E.J."/>
            <person name="Lindsay J.A."/>
            <person name="Peacock S.J."/>
            <person name="Day N.P.J."/>
            <person name="Enright M.C."/>
            <person name="Foster T.J."/>
            <person name="Moore C.E."/>
            <person name="Hurst L."/>
            <person name="Atkin R."/>
            <person name="Barron A."/>
            <person name="Bason N."/>
            <person name="Bentley S.D."/>
            <person name="Chillingworth C."/>
            <person name="Chillingworth T."/>
            <person name="Churcher C."/>
            <person name="Clark L."/>
            <person name="Corton C."/>
            <person name="Cronin A."/>
            <person name="Doggett J."/>
            <person name="Dowd L."/>
            <person name="Feltwell T."/>
            <person name="Hance Z."/>
            <person name="Harris B."/>
            <person name="Hauser H."/>
            <person name="Holroyd S."/>
            <person name="Jagels K."/>
            <person name="James K.D."/>
            <person name="Lennard N."/>
            <person name="Line A."/>
            <person name="Mayes R."/>
            <person name="Moule S."/>
            <person name="Mungall K."/>
            <person name="Ormond D."/>
            <person name="Quail M.A."/>
            <person name="Rabbinowitsch E."/>
            <person name="Rutherford K.M."/>
            <person name="Sanders M."/>
            <person name="Sharp S."/>
            <person name="Simmonds M."/>
            <person name="Stevens K."/>
            <person name="Whitehead S."/>
            <person name="Barrell B.G."/>
            <person name="Spratt B.G."/>
            <person name="Parkhill J."/>
        </authorList>
    </citation>
    <scope>NUCLEOTIDE SEQUENCE [LARGE SCALE GENOMIC DNA]</scope>
    <source>
        <strain>MSSA476</strain>
    </source>
</reference>
<keyword id="KW-0119">Carbohydrate metabolism</keyword>
<keyword id="KW-0963">Cytoplasm</keyword>
<keyword id="KW-0456">Lyase</keyword>
<keyword id="KW-0704">Schiff base</keyword>
<sequence>MNKDLKGLYAALLVPFDENGQVNEQGLKQIAQNAIETEELDGLYVNGSSGENFLLNTEQKKQVFKVAKEAVGDKVKLIAQVGSLDLNEAIELGKYATELGYDALSAVTPFYYPFTFEEIRDYYFDIIEATQNNMIIYAIPDLTGVNISIEQFSELFNHEKIVGVKYTAPNFFLLERIRKAFPDKLILSGFDEMLVQATISGVDGAIGSTYNVNGRRARKIFDLARQGQIQEAYQLQHDSNDIIETVLSMGIYPTLKEILRHRGIDAGLPKRPFKPFNEAHRQTLDQLIAKYDL</sequence>
<dbReference type="EC" id="4.1.3.3" evidence="1"/>
<dbReference type="EMBL" id="BX571857">
    <property type="protein sequence ID" value="CAG42063.1"/>
    <property type="molecule type" value="Genomic_DNA"/>
</dbReference>
<dbReference type="RefSeq" id="WP_001030738.1">
    <property type="nucleotide sequence ID" value="NC_002953.3"/>
</dbReference>
<dbReference type="SMR" id="Q6GCF6"/>
<dbReference type="KEGG" id="sas:SAS0292"/>
<dbReference type="HOGENOM" id="CLU_049343_5_1_9"/>
<dbReference type="UniPathway" id="UPA00629">
    <property type="reaction ID" value="UER00680"/>
</dbReference>
<dbReference type="GO" id="GO:0005829">
    <property type="term" value="C:cytosol"/>
    <property type="evidence" value="ECO:0007669"/>
    <property type="project" value="TreeGrafter"/>
</dbReference>
<dbReference type="GO" id="GO:0008747">
    <property type="term" value="F:N-acetylneuraminate lyase activity"/>
    <property type="evidence" value="ECO:0007669"/>
    <property type="project" value="UniProtKB-UniRule"/>
</dbReference>
<dbReference type="GO" id="GO:0005975">
    <property type="term" value="P:carbohydrate metabolic process"/>
    <property type="evidence" value="ECO:0007669"/>
    <property type="project" value="UniProtKB-UniRule"/>
</dbReference>
<dbReference type="GO" id="GO:0019262">
    <property type="term" value="P:N-acetylneuraminate catabolic process"/>
    <property type="evidence" value="ECO:0007669"/>
    <property type="project" value="UniProtKB-UniRule"/>
</dbReference>
<dbReference type="CDD" id="cd00954">
    <property type="entry name" value="NAL"/>
    <property type="match status" value="1"/>
</dbReference>
<dbReference type="FunFam" id="3.20.20.70:FF:000039">
    <property type="entry name" value="N-acetylneuraminate lyase"/>
    <property type="match status" value="1"/>
</dbReference>
<dbReference type="Gene3D" id="3.20.20.70">
    <property type="entry name" value="Aldolase class I"/>
    <property type="match status" value="1"/>
</dbReference>
<dbReference type="HAMAP" id="MF_01237">
    <property type="entry name" value="N_acetylneuram_lyase"/>
    <property type="match status" value="1"/>
</dbReference>
<dbReference type="InterPro" id="IPR013785">
    <property type="entry name" value="Aldolase_TIM"/>
</dbReference>
<dbReference type="InterPro" id="IPR002220">
    <property type="entry name" value="DapA-like"/>
</dbReference>
<dbReference type="InterPro" id="IPR005264">
    <property type="entry name" value="NanA"/>
</dbReference>
<dbReference type="InterPro" id="IPR020625">
    <property type="entry name" value="Schiff_base-form_aldolases_AS"/>
</dbReference>
<dbReference type="NCBIfam" id="NF003164">
    <property type="entry name" value="PRK04147.1"/>
    <property type="match status" value="1"/>
</dbReference>
<dbReference type="PANTHER" id="PTHR42849">
    <property type="entry name" value="N-ACETYLNEURAMINATE LYASE"/>
    <property type="match status" value="1"/>
</dbReference>
<dbReference type="PANTHER" id="PTHR42849:SF1">
    <property type="entry name" value="N-ACETYLNEURAMINATE LYASE"/>
    <property type="match status" value="1"/>
</dbReference>
<dbReference type="Pfam" id="PF00701">
    <property type="entry name" value="DHDPS"/>
    <property type="match status" value="1"/>
</dbReference>
<dbReference type="PIRSF" id="PIRSF001365">
    <property type="entry name" value="DHDPS"/>
    <property type="match status" value="1"/>
</dbReference>
<dbReference type="PRINTS" id="PR00146">
    <property type="entry name" value="DHPICSNTHASE"/>
</dbReference>
<dbReference type="SMART" id="SM01130">
    <property type="entry name" value="DHDPS"/>
    <property type="match status" value="1"/>
</dbReference>
<dbReference type="SUPFAM" id="SSF51569">
    <property type="entry name" value="Aldolase"/>
    <property type="match status" value="1"/>
</dbReference>
<dbReference type="PROSITE" id="PS00666">
    <property type="entry name" value="DHDPS_2"/>
    <property type="match status" value="1"/>
</dbReference>
<name>NANA_STAAS</name>
<gene>
    <name evidence="1" type="primary">nanA</name>
    <name type="ordered locus">SAS0292</name>
</gene>
<feature type="chain" id="PRO_0000103225" description="N-acetylneuraminate lyase">
    <location>
        <begin position="1"/>
        <end position="293"/>
    </location>
</feature>
<feature type="active site" description="Proton donor" evidence="1">
    <location>
        <position position="137"/>
    </location>
</feature>
<feature type="active site" description="Schiff-base intermediate with substrate" evidence="1">
    <location>
        <position position="165"/>
    </location>
</feature>
<feature type="binding site" evidence="1">
    <location>
        <position position="48"/>
    </location>
    <ligand>
        <name>aceneuramate</name>
        <dbReference type="ChEBI" id="CHEBI:173083"/>
    </ligand>
</feature>
<feature type="binding site" evidence="1">
    <location>
        <position position="49"/>
    </location>
    <ligand>
        <name>aceneuramate</name>
        <dbReference type="ChEBI" id="CHEBI:173083"/>
    </ligand>
</feature>
<feature type="binding site" evidence="1">
    <location>
        <position position="167"/>
    </location>
    <ligand>
        <name>aceneuramate</name>
        <dbReference type="ChEBI" id="CHEBI:173083"/>
    </ligand>
</feature>
<feature type="binding site" evidence="1">
    <location>
        <position position="189"/>
    </location>
    <ligand>
        <name>aceneuramate</name>
        <dbReference type="ChEBI" id="CHEBI:173083"/>
    </ligand>
</feature>
<feature type="binding site" evidence="1">
    <location>
        <position position="191"/>
    </location>
    <ligand>
        <name>aceneuramate</name>
        <dbReference type="ChEBI" id="CHEBI:173083"/>
    </ligand>
</feature>
<feature type="binding site" evidence="1">
    <location>
        <position position="192"/>
    </location>
    <ligand>
        <name>aceneuramate</name>
        <dbReference type="ChEBI" id="CHEBI:173083"/>
    </ligand>
</feature>
<feature type="binding site" evidence="1">
    <location>
        <position position="208"/>
    </location>
    <ligand>
        <name>aceneuramate</name>
        <dbReference type="ChEBI" id="CHEBI:173083"/>
    </ligand>
</feature>
<proteinExistence type="inferred from homology"/>
<comment type="function">
    <text evidence="1">Catalyzes the reversible aldol cleavage of N-acetylneuraminic acid (sialic acid; Neu5Ac) to form pyruvate and N-acetylmannosamine (ManNAc) via a Schiff base intermediate.</text>
</comment>
<comment type="catalytic activity">
    <reaction evidence="1">
        <text>aceneuramate = aldehydo-N-acetyl-D-mannosamine + pyruvate</text>
        <dbReference type="Rhea" id="RHEA:23296"/>
        <dbReference type="ChEBI" id="CHEBI:15361"/>
        <dbReference type="ChEBI" id="CHEBI:17122"/>
        <dbReference type="ChEBI" id="CHEBI:173083"/>
        <dbReference type="EC" id="4.1.3.3"/>
    </reaction>
</comment>
<comment type="pathway">
    <text evidence="1">Amino-sugar metabolism; N-acetylneuraminate degradation; D-fructose 6-phosphate from N-acetylneuraminate: step 1/5.</text>
</comment>
<comment type="subunit">
    <text evidence="1">Homotetramer.</text>
</comment>
<comment type="subcellular location">
    <subcellularLocation>
        <location evidence="1">Cytoplasm</location>
    </subcellularLocation>
</comment>
<comment type="similarity">
    <text evidence="1">Belongs to the DapA family. NanA subfamily.</text>
</comment>